<sequence>MSDFQKSFSESTSSIKFDEKYIDNSVQPNDIGVAEQWAVKTVADPCVGNLATPVNSGYFTKAFINNLPFYREGISPNFRGLETGAAFGYLLYGPFTMTGPLRNSEFALTAGLLAAIGAVHILTALLVLYNAPGKAPNVQPPDATVNNPPKDLFTRAGWADFTSGFWLGGCGGSVFAWLLVGTLHLDTIMPIIKNIWTAG</sequence>
<accession>A2BT95</accession>
<dbReference type="EMBL" id="CP000551">
    <property type="protein sequence ID" value="ABM71006.1"/>
    <property type="molecule type" value="Genomic_DNA"/>
</dbReference>
<dbReference type="RefSeq" id="WP_011819132.1">
    <property type="nucleotide sequence ID" value="NC_008816.1"/>
</dbReference>
<dbReference type="SMR" id="A2BT95"/>
<dbReference type="STRING" id="146891.A9601_17231"/>
<dbReference type="KEGG" id="pmb:A9601_17231"/>
<dbReference type="eggNOG" id="ENOG5033UPE">
    <property type="taxonomic scope" value="Bacteria"/>
</dbReference>
<dbReference type="HOGENOM" id="CLU_092204_1_0_3"/>
<dbReference type="OrthoDB" id="464381at2"/>
<dbReference type="Proteomes" id="UP000002590">
    <property type="component" value="Chromosome"/>
</dbReference>
<dbReference type="GO" id="GO:0009538">
    <property type="term" value="C:photosystem I reaction center"/>
    <property type="evidence" value="ECO:0007669"/>
    <property type="project" value="InterPro"/>
</dbReference>
<dbReference type="GO" id="GO:0031676">
    <property type="term" value="C:plasma membrane-derived thylakoid membrane"/>
    <property type="evidence" value="ECO:0007669"/>
    <property type="project" value="UniProtKB-SubCell"/>
</dbReference>
<dbReference type="GO" id="GO:0015979">
    <property type="term" value="P:photosynthesis"/>
    <property type="evidence" value="ECO:0007669"/>
    <property type="project" value="UniProtKB-UniRule"/>
</dbReference>
<dbReference type="Gene3D" id="1.20.1240.10">
    <property type="entry name" value="Photosystem I PsaL, reaction centre subunit XI"/>
    <property type="match status" value="1"/>
</dbReference>
<dbReference type="HAMAP" id="MF_00447">
    <property type="entry name" value="PSI_PsaL"/>
    <property type="match status" value="1"/>
</dbReference>
<dbReference type="InterPro" id="IPR003757">
    <property type="entry name" value="PSI_PsaL"/>
</dbReference>
<dbReference type="InterPro" id="IPR036592">
    <property type="entry name" value="PSI_PsaL_sf"/>
</dbReference>
<dbReference type="InterPro" id="IPR022980">
    <property type="entry name" value="PSI_suXI"/>
</dbReference>
<dbReference type="NCBIfam" id="NF001925">
    <property type="entry name" value="PRK00704.1-1"/>
    <property type="match status" value="1"/>
</dbReference>
<dbReference type="NCBIfam" id="NF001928">
    <property type="entry name" value="PRK00704.1-5"/>
    <property type="match status" value="1"/>
</dbReference>
<dbReference type="PANTHER" id="PTHR34803">
    <property type="entry name" value="PHOTOSYSTEM I REACTION CENTER SUBUNIT XI, CHLOROPLASTIC"/>
    <property type="match status" value="1"/>
</dbReference>
<dbReference type="PANTHER" id="PTHR34803:SF2">
    <property type="entry name" value="PHOTOSYSTEM I REACTION CENTER SUBUNIT XI, CHLOROPLASTIC"/>
    <property type="match status" value="1"/>
</dbReference>
<dbReference type="Pfam" id="PF02605">
    <property type="entry name" value="PsaL"/>
    <property type="match status" value="1"/>
</dbReference>
<dbReference type="SUPFAM" id="SSF81568">
    <property type="entry name" value="Photosystem I reaction center subunit XI, PsaL"/>
    <property type="match status" value="1"/>
</dbReference>
<comment type="subcellular location">
    <subcellularLocation>
        <location evidence="1">Cellular thylakoid membrane</location>
        <topology evidence="1">Multi-pass membrane protein</topology>
    </subcellularLocation>
</comment>
<comment type="similarity">
    <text evidence="1">Belongs to the PsaL family.</text>
</comment>
<name>PSAL_PROMS</name>
<protein>
    <recommendedName>
        <fullName evidence="1">Photosystem I reaction center subunit XI</fullName>
    </recommendedName>
    <alternativeName>
        <fullName evidence="1">PSI subunit V</fullName>
    </alternativeName>
    <alternativeName>
        <fullName evidence="1">PSI-L</fullName>
    </alternativeName>
</protein>
<keyword id="KW-0472">Membrane</keyword>
<keyword id="KW-0602">Photosynthesis</keyword>
<keyword id="KW-0603">Photosystem I</keyword>
<keyword id="KW-0793">Thylakoid</keyword>
<keyword id="KW-0812">Transmembrane</keyword>
<keyword id="KW-1133">Transmembrane helix</keyword>
<feature type="chain" id="PRO_1000026181" description="Photosystem I reaction center subunit XI">
    <location>
        <begin position="1"/>
        <end position="199"/>
    </location>
</feature>
<feature type="transmembrane region" description="Helical" evidence="1">
    <location>
        <begin position="108"/>
        <end position="128"/>
    </location>
</feature>
<feature type="transmembrane region" description="Helical" evidence="1">
    <location>
        <begin position="165"/>
        <end position="185"/>
    </location>
</feature>
<evidence type="ECO:0000255" key="1">
    <source>
        <dbReference type="HAMAP-Rule" id="MF_00447"/>
    </source>
</evidence>
<gene>
    <name evidence="1" type="primary">psaL</name>
    <name type="ordered locus">A9601_17231</name>
</gene>
<organism>
    <name type="scientific">Prochlorococcus marinus (strain AS9601)</name>
    <dbReference type="NCBI Taxonomy" id="146891"/>
    <lineage>
        <taxon>Bacteria</taxon>
        <taxon>Bacillati</taxon>
        <taxon>Cyanobacteriota</taxon>
        <taxon>Cyanophyceae</taxon>
        <taxon>Synechococcales</taxon>
        <taxon>Prochlorococcaceae</taxon>
        <taxon>Prochlorococcus</taxon>
    </lineage>
</organism>
<reference key="1">
    <citation type="journal article" date="2007" name="PLoS Genet.">
        <title>Patterns and implications of gene gain and loss in the evolution of Prochlorococcus.</title>
        <authorList>
            <person name="Kettler G.C."/>
            <person name="Martiny A.C."/>
            <person name="Huang K."/>
            <person name="Zucker J."/>
            <person name="Coleman M.L."/>
            <person name="Rodrigue S."/>
            <person name="Chen F."/>
            <person name="Lapidus A."/>
            <person name="Ferriera S."/>
            <person name="Johnson J."/>
            <person name="Steglich C."/>
            <person name="Church G.M."/>
            <person name="Richardson P."/>
            <person name="Chisholm S.W."/>
        </authorList>
    </citation>
    <scope>NUCLEOTIDE SEQUENCE [LARGE SCALE GENOMIC DNA]</scope>
    <source>
        <strain>AS9601</strain>
    </source>
</reference>
<proteinExistence type="inferred from homology"/>